<keyword id="KW-0106">Calcium</keyword>
<keyword id="KW-1015">Disulfide bond</keyword>
<keyword id="KW-0325">Glycoprotein</keyword>
<keyword id="KW-0349">Heme</keyword>
<keyword id="KW-0376">Hydrogen peroxide</keyword>
<keyword id="KW-0408">Iron</keyword>
<keyword id="KW-0479">Metal-binding</keyword>
<keyword id="KW-0560">Oxidoreductase</keyword>
<keyword id="KW-0575">Peroxidase</keyword>
<keyword id="KW-0964">Secreted</keyword>
<keyword id="KW-0732">Signal</keyword>
<keyword id="KW-0926">Vacuole</keyword>
<sequence>MHSPSSTSFTWILITLGCLAFYASLSDAQLTPTFYDTSCPNVSNIVRDIIINELRSDPRITASILRLHFHDCFVNGCDASILLDNTTSFLTEKDALGNANSARGFPTVDRIKAAVERACPRTVSCADVLTIAAQQSVNLAGGPSWRVPLGRRDSLQAFLDLANANLPAPFFTLPQLKDAFAKVGLDRPSDLVALSGGHTFGKNQCRFIMDRLYNFSNTGLPDPTLNTTYLQTLRQQCPLNGNQSVLVDFDLRTPTVFDNKYYVNLKEQKGLIQSDQELFSSPNATDTIPLVRSFADGTQKFFNAFVEAMNRMGNITPLTGTQGEIRLNCRVVNSNSLLHDIVEVVDFVSSM</sequence>
<reference key="1">
    <citation type="journal article" date="1988" name="Eur. J. Biochem.">
        <title>Structure of the horseradish peroxidase isozyme C genes.</title>
        <authorList>
            <person name="Fujiyama K."/>
            <person name="Takemura H."/>
            <person name="Shibayama S."/>
            <person name="Kobayashi K."/>
            <person name="Choi J.K."/>
            <person name="Shinmyo A."/>
            <person name="Takano M."/>
            <person name="Yamada Y."/>
            <person name="Okada H."/>
        </authorList>
    </citation>
    <scope>NUCLEOTIDE SEQUENCE [GENOMIC DNA]</scope>
</reference>
<dbReference type="EC" id="1.11.1.7"/>
<dbReference type="EMBL" id="M37157">
    <property type="protein sequence ID" value="AAA33378.1"/>
    <property type="molecule type" value="Genomic_DNA"/>
</dbReference>
<dbReference type="PIR" id="S00626">
    <property type="entry name" value="S00626"/>
</dbReference>
<dbReference type="SMR" id="P15232"/>
<dbReference type="PeroxiBase" id="89">
    <property type="entry name" value="AruPrx01-2"/>
</dbReference>
<dbReference type="GlyCosmos" id="P15232">
    <property type="glycosylation" value="6 sites, No reported glycans"/>
</dbReference>
<dbReference type="SABIO-RK" id="P15232"/>
<dbReference type="GO" id="GO:0005576">
    <property type="term" value="C:extracellular region"/>
    <property type="evidence" value="ECO:0007669"/>
    <property type="project" value="UniProtKB-SubCell"/>
</dbReference>
<dbReference type="GO" id="GO:0005773">
    <property type="term" value="C:vacuole"/>
    <property type="evidence" value="ECO:0007669"/>
    <property type="project" value="UniProtKB-SubCell"/>
</dbReference>
<dbReference type="GO" id="GO:0020037">
    <property type="term" value="F:heme binding"/>
    <property type="evidence" value="ECO:0007669"/>
    <property type="project" value="InterPro"/>
</dbReference>
<dbReference type="GO" id="GO:0140825">
    <property type="term" value="F:lactoperoxidase activity"/>
    <property type="evidence" value="ECO:0007669"/>
    <property type="project" value="UniProtKB-EC"/>
</dbReference>
<dbReference type="GO" id="GO:0046872">
    <property type="term" value="F:metal ion binding"/>
    <property type="evidence" value="ECO:0007669"/>
    <property type="project" value="UniProtKB-KW"/>
</dbReference>
<dbReference type="GO" id="GO:0042744">
    <property type="term" value="P:hydrogen peroxide catabolic process"/>
    <property type="evidence" value="ECO:0007669"/>
    <property type="project" value="UniProtKB-KW"/>
</dbReference>
<dbReference type="GO" id="GO:0006979">
    <property type="term" value="P:response to oxidative stress"/>
    <property type="evidence" value="ECO:0007669"/>
    <property type="project" value="InterPro"/>
</dbReference>
<dbReference type="CDD" id="cd00693">
    <property type="entry name" value="secretory_peroxidase"/>
    <property type="match status" value="1"/>
</dbReference>
<dbReference type="FunFam" id="1.10.420.10:FF:000001">
    <property type="entry name" value="Peroxidase"/>
    <property type="match status" value="1"/>
</dbReference>
<dbReference type="FunFam" id="1.10.520.10:FF:000001">
    <property type="entry name" value="Peroxidase"/>
    <property type="match status" value="1"/>
</dbReference>
<dbReference type="Gene3D" id="1.10.520.10">
    <property type="match status" value="1"/>
</dbReference>
<dbReference type="Gene3D" id="1.10.420.10">
    <property type="entry name" value="Peroxidase, domain 2"/>
    <property type="match status" value="1"/>
</dbReference>
<dbReference type="InterPro" id="IPR002016">
    <property type="entry name" value="Haem_peroxidase"/>
</dbReference>
<dbReference type="InterPro" id="IPR010255">
    <property type="entry name" value="Haem_peroxidase_sf"/>
</dbReference>
<dbReference type="InterPro" id="IPR000823">
    <property type="entry name" value="Peroxidase_pln"/>
</dbReference>
<dbReference type="InterPro" id="IPR019794">
    <property type="entry name" value="Peroxidases_AS"/>
</dbReference>
<dbReference type="InterPro" id="IPR019793">
    <property type="entry name" value="Peroxidases_heam-ligand_BS"/>
</dbReference>
<dbReference type="InterPro" id="IPR033905">
    <property type="entry name" value="Secretory_peroxidase"/>
</dbReference>
<dbReference type="PANTHER" id="PTHR31388:SF270">
    <property type="entry name" value="PEROXIDASE 22-RELATED"/>
    <property type="match status" value="1"/>
</dbReference>
<dbReference type="PANTHER" id="PTHR31388">
    <property type="entry name" value="PEROXIDASE 72-RELATED"/>
    <property type="match status" value="1"/>
</dbReference>
<dbReference type="Pfam" id="PF00141">
    <property type="entry name" value="peroxidase"/>
    <property type="match status" value="1"/>
</dbReference>
<dbReference type="PRINTS" id="PR00458">
    <property type="entry name" value="PEROXIDASE"/>
</dbReference>
<dbReference type="PRINTS" id="PR00461">
    <property type="entry name" value="PLPEROXIDASE"/>
</dbReference>
<dbReference type="SUPFAM" id="SSF48113">
    <property type="entry name" value="Heme-dependent peroxidases"/>
    <property type="match status" value="1"/>
</dbReference>
<dbReference type="PROSITE" id="PS00435">
    <property type="entry name" value="PEROXIDASE_1"/>
    <property type="match status" value="1"/>
</dbReference>
<dbReference type="PROSITE" id="PS00436">
    <property type="entry name" value="PEROXIDASE_2"/>
    <property type="match status" value="1"/>
</dbReference>
<dbReference type="PROSITE" id="PS50873">
    <property type="entry name" value="PEROXIDASE_4"/>
    <property type="match status" value="1"/>
</dbReference>
<organism>
    <name type="scientific">Armoracia rusticana</name>
    <name type="common">Horseradish</name>
    <name type="synonym">Armoracia laphatifolia</name>
    <dbReference type="NCBI Taxonomy" id="3704"/>
    <lineage>
        <taxon>Eukaryota</taxon>
        <taxon>Viridiplantae</taxon>
        <taxon>Streptophyta</taxon>
        <taxon>Embryophyta</taxon>
        <taxon>Tracheophyta</taxon>
        <taxon>Spermatophyta</taxon>
        <taxon>Magnoliopsida</taxon>
        <taxon>eudicotyledons</taxon>
        <taxon>Gunneridae</taxon>
        <taxon>Pentapetalae</taxon>
        <taxon>rosids</taxon>
        <taxon>malvids</taxon>
        <taxon>Brassicales</taxon>
        <taxon>Brassicaceae</taxon>
        <taxon>Cardamineae</taxon>
        <taxon>Armoracia</taxon>
    </lineage>
</organism>
<accession>P15232</accession>
<name>PER1B_ARMRU</name>
<proteinExistence type="inferred from homology"/>
<comment type="function">
    <text>Removal of H(2)O(2), oxidation of toxic reductants, biosynthesis and degradation of lignin, suberization, auxin catabolism, response to environmental stresses such as wounding, pathogen attack and oxidative stress. These functions might be dependent on each isozyme/isoform in each plant tissue.</text>
</comment>
<comment type="catalytic activity">
    <reaction>
        <text>2 a phenolic donor + H2O2 = 2 a phenolic radical donor + 2 H2O</text>
        <dbReference type="Rhea" id="RHEA:56136"/>
        <dbReference type="ChEBI" id="CHEBI:15377"/>
        <dbReference type="ChEBI" id="CHEBI:16240"/>
        <dbReference type="ChEBI" id="CHEBI:139520"/>
        <dbReference type="ChEBI" id="CHEBI:139521"/>
        <dbReference type="EC" id="1.11.1.7"/>
    </reaction>
</comment>
<comment type="cofactor">
    <cofactor>
        <name>Ca(2+)</name>
        <dbReference type="ChEBI" id="CHEBI:29108"/>
    </cofactor>
    <text>Binds 2 calcium ions per subunit.</text>
</comment>
<comment type="cofactor">
    <cofactor>
        <name>heme b</name>
        <dbReference type="ChEBI" id="CHEBI:60344"/>
    </cofactor>
    <text>Binds 1 heme b (iron(II)-protoporphyrin IX) group per subunit.</text>
</comment>
<comment type="subcellular location">
    <subcellularLocation>
        <location evidence="4">Secreted</location>
    </subcellularLocation>
    <subcellularLocation>
        <location evidence="4">Vacuole</location>
    </subcellularLocation>
    <text>Carboxy-terminal extension appears to target the protein to vacuoles.</text>
</comment>
<comment type="similarity">
    <text evidence="2">Belongs to the peroxidase family. Classical plant (class III) peroxidase subfamily.</text>
</comment>
<protein>
    <recommendedName>
        <fullName>Peroxidase C1B</fullName>
        <ecNumber>1.11.1.7</ecNumber>
    </recommendedName>
</protein>
<gene>
    <name type="primary">PRXC1B</name>
    <name type="synonym">HRPC2</name>
</gene>
<evidence type="ECO:0000255" key="1"/>
<evidence type="ECO:0000255" key="2">
    <source>
        <dbReference type="PROSITE-ProRule" id="PRU00297"/>
    </source>
</evidence>
<evidence type="ECO:0000255" key="3">
    <source>
        <dbReference type="PROSITE-ProRule" id="PRU10012"/>
    </source>
</evidence>
<evidence type="ECO:0000305" key="4"/>
<feature type="signal peptide">
    <location>
        <begin position="1"/>
        <end position="28"/>
    </location>
</feature>
<feature type="chain" id="PRO_0000023741" description="Peroxidase C1B">
    <location>
        <begin position="29"/>
        <end position="351"/>
    </location>
</feature>
<feature type="active site" description="Proton acceptor" evidence="2 3">
    <location>
        <position position="70"/>
    </location>
</feature>
<feature type="binding site" evidence="2">
    <location>
        <position position="71"/>
    </location>
    <ligand>
        <name>Ca(2+)</name>
        <dbReference type="ChEBI" id="CHEBI:29108"/>
        <label>1</label>
    </ligand>
</feature>
<feature type="binding site" evidence="2">
    <location>
        <position position="74"/>
    </location>
    <ligand>
        <name>Ca(2+)</name>
        <dbReference type="ChEBI" id="CHEBI:29108"/>
        <label>1</label>
    </ligand>
</feature>
<feature type="binding site" evidence="2">
    <location>
        <position position="76"/>
    </location>
    <ligand>
        <name>Ca(2+)</name>
        <dbReference type="ChEBI" id="CHEBI:29108"/>
        <label>1</label>
    </ligand>
</feature>
<feature type="binding site" evidence="2">
    <location>
        <position position="78"/>
    </location>
    <ligand>
        <name>Ca(2+)</name>
        <dbReference type="ChEBI" id="CHEBI:29108"/>
        <label>1</label>
    </ligand>
</feature>
<feature type="binding site" evidence="2">
    <location>
        <position position="80"/>
    </location>
    <ligand>
        <name>Ca(2+)</name>
        <dbReference type="ChEBI" id="CHEBI:29108"/>
        <label>1</label>
    </ligand>
</feature>
<feature type="binding site" evidence="2">
    <location>
        <position position="167"/>
    </location>
    <ligand>
        <name>substrate</name>
    </ligand>
</feature>
<feature type="binding site" description="axial binding residue" evidence="2">
    <location>
        <position position="198"/>
    </location>
    <ligand>
        <name>heme b</name>
        <dbReference type="ChEBI" id="CHEBI:60344"/>
    </ligand>
    <ligandPart>
        <name>Fe</name>
        <dbReference type="ChEBI" id="CHEBI:18248"/>
    </ligandPart>
</feature>
<feature type="binding site" evidence="2">
    <location>
        <position position="199"/>
    </location>
    <ligand>
        <name>Ca(2+)</name>
        <dbReference type="ChEBI" id="CHEBI:29108"/>
        <label>2</label>
    </ligand>
</feature>
<feature type="binding site" evidence="2">
    <location>
        <position position="250"/>
    </location>
    <ligand>
        <name>Ca(2+)</name>
        <dbReference type="ChEBI" id="CHEBI:29108"/>
        <label>2</label>
    </ligand>
</feature>
<feature type="binding site" evidence="2">
    <location>
        <position position="253"/>
    </location>
    <ligand>
        <name>Ca(2+)</name>
        <dbReference type="ChEBI" id="CHEBI:29108"/>
        <label>2</label>
    </ligand>
</feature>
<feature type="binding site" evidence="2">
    <location>
        <position position="258"/>
    </location>
    <ligand>
        <name>Ca(2+)</name>
        <dbReference type="ChEBI" id="CHEBI:29108"/>
        <label>2</label>
    </ligand>
</feature>
<feature type="site" description="Transition state stabilizer" evidence="2">
    <location>
        <position position="66"/>
    </location>
</feature>
<feature type="glycosylation site" description="N-linked (GlcNAc...) asparagine" evidence="1">
    <location>
        <position position="41"/>
    </location>
</feature>
<feature type="glycosylation site" description="N-linked (GlcNAc...) asparagine" evidence="1">
    <location>
        <position position="85"/>
    </location>
</feature>
<feature type="glycosylation site" description="N-linked (GlcNAc...) asparagine" evidence="1">
    <location>
        <position position="214"/>
    </location>
</feature>
<feature type="glycosylation site" description="N-linked (GlcNAc...) asparagine" evidence="1">
    <location>
        <position position="226"/>
    </location>
</feature>
<feature type="glycosylation site" description="N-linked (GlcNAc...) asparagine" evidence="1">
    <location>
        <position position="242"/>
    </location>
</feature>
<feature type="glycosylation site" description="N-linked (GlcNAc...) asparagine" evidence="1">
    <location>
        <position position="283"/>
    </location>
</feature>
<feature type="disulfide bond" evidence="2">
    <location>
        <begin position="39"/>
        <end position="119"/>
    </location>
</feature>
<feature type="disulfide bond" evidence="2">
    <location>
        <begin position="72"/>
        <end position="77"/>
    </location>
</feature>
<feature type="disulfide bond" evidence="2">
    <location>
        <begin position="125"/>
        <end position="329"/>
    </location>
</feature>
<feature type="disulfide bond" evidence="2">
    <location>
        <begin position="205"/>
        <end position="237"/>
    </location>
</feature>